<evidence type="ECO:0000255" key="1">
    <source>
        <dbReference type="HAMAP-Rule" id="MF_00223"/>
    </source>
</evidence>
<gene>
    <name evidence="1" type="primary">folE</name>
    <name type="ordered locus">Sbal195_0383</name>
</gene>
<organism>
    <name type="scientific">Shewanella baltica (strain OS195)</name>
    <dbReference type="NCBI Taxonomy" id="399599"/>
    <lineage>
        <taxon>Bacteria</taxon>
        <taxon>Pseudomonadati</taxon>
        <taxon>Pseudomonadota</taxon>
        <taxon>Gammaproteobacteria</taxon>
        <taxon>Alteromonadales</taxon>
        <taxon>Shewanellaceae</taxon>
        <taxon>Shewanella</taxon>
    </lineage>
</organism>
<name>GCH1_SHEB9</name>
<protein>
    <recommendedName>
        <fullName evidence="1">GTP cyclohydrolase 1</fullName>
        <ecNumber evidence="1">3.5.4.16</ecNumber>
    </recommendedName>
    <alternativeName>
        <fullName evidence="1">GTP cyclohydrolase I</fullName>
        <shortName evidence="1">GTP-CH-I</shortName>
    </alternativeName>
</protein>
<accession>A9KXZ9</accession>
<keyword id="KW-0342">GTP-binding</keyword>
<keyword id="KW-0378">Hydrolase</keyword>
<keyword id="KW-0479">Metal-binding</keyword>
<keyword id="KW-0547">Nucleotide-binding</keyword>
<keyword id="KW-0554">One-carbon metabolism</keyword>
<keyword id="KW-0862">Zinc</keyword>
<reference key="1">
    <citation type="submission" date="2007-11" db="EMBL/GenBank/DDBJ databases">
        <title>Complete sequence of chromosome of Shewanella baltica OS195.</title>
        <authorList>
            <consortium name="US DOE Joint Genome Institute"/>
            <person name="Copeland A."/>
            <person name="Lucas S."/>
            <person name="Lapidus A."/>
            <person name="Barry K."/>
            <person name="Glavina del Rio T."/>
            <person name="Dalin E."/>
            <person name="Tice H."/>
            <person name="Pitluck S."/>
            <person name="Chain P."/>
            <person name="Malfatti S."/>
            <person name="Shin M."/>
            <person name="Vergez L."/>
            <person name="Schmutz J."/>
            <person name="Larimer F."/>
            <person name="Land M."/>
            <person name="Hauser L."/>
            <person name="Kyrpides N."/>
            <person name="Kim E."/>
            <person name="Brettar I."/>
            <person name="Rodrigues J."/>
            <person name="Konstantinidis K."/>
            <person name="Klappenbach J."/>
            <person name="Hofle M."/>
            <person name="Tiedje J."/>
            <person name="Richardson P."/>
        </authorList>
    </citation>
    <scope>NUCLEOTIDE SEQUENCE [LARGE SCALE GENOMIC DNA]</scope>
    <source>
        <strain>OS195</strain>
    </source>
</reference>
<feature type="chain" id="PRO_1000078150" description="GTP cyclohydrolase 1">
    <location>
        <begin position="1"/>
        <end position="216"/>
    </location>
</feature>
<feature type="binding site" evidence="1">
    <location>
        <position position="108"/>
    </location>
    <ligand>
        <name>Zn(2+)</name>
        <dbReference type="ChEBI" id="CHEBI:29105"/>
    </ligand>
</feature>
<feature type="binding site" evidence="1">
    <location>
        <position position="111"/>
    </location>
    <ligand>
        <name>Zn(2+)</name>
        <dbReference type="ChEBI" id="CHEBI:29105"/>
    </ligand>
</feature>
<feature type="binding site" evidence="1">
    <location>
        <position position="179"/>
    </location>
    <ligand>
        <name>Zn(2+)</name>
        <dbReference type="ChEBI" id="CHEBI:29105"/>
    </ligand>
</feature>
<proteinExistence type="inferred from homology"/>
<comment type="catalytic activity">
    <reaction evidence="1">
        <text>GTP + H2O = 7,8-dihydroneopterin 3'-triphosphate + formate + H(+)</text>
        <dbReference type="Rhea" id="RHEA:17473"/>
        <dbReference type="ChEBI" id="CHEBI:15377"/>
        <dbReference type="ChEBI" id="CHEBI:15378"/>
        <dbReference type="ChEBI" id="CHEBI:15740"/>
        <dbReference type="ChEBI" id="CHEBI:37565"/>
        <dbReference type="ChEBI" id="CHEBI:58462"/>
        <dbReference type="EC" id="3.5.4.16"/>
    </reaction>
</comment>
<comment type="pathway">
    <text evidence="1">Cofactor biosynthesis; 7,8-dihydroneopterin triphosphate biosynthesis; 7,8-dihydroneopterin triphosphate from GTP: step 1/1.</text>
</comment>
<comment type="subunit">
    <text evidence="1">Homomer.</text>
</comment>
<comment type="similarity">
    <text evidence="1">Belongs to the GTP cyclohydrolase I family.</text>
</comment>
<dbReference type="EC" id="3.5.4.16" evidence="1"/>
<dbReference type="EMBL" id="CP000891">
    <property type="protein sequence ID" value="ABX47564.1"/>
    <property type="molecule type" value="Genomic_DNA"/>
</dbReference>
<dbReference type="RefSeq" id="WP_006079864.1">
    <property type="nucleotide sequence ID" value="NC_009997.1"/>
</dbReference>
<dbReference type="SMR" id="A9KXZ9"/>
<dbReference type="GeneID" id="11770722"/>
<dbReference type="KEGG" id="sbn:Sbal195_0383"/>
<dbReference type="HOGENOM" id="CLU_049768_3_2_6"/>
<dbReference type="UniPathway" id="UPA00848">
    <property type="reaction ID" value="UER00151"/>
</dbReference>
<dbReference type="Proteomes" id="UP000000770">
    <property type="component" value="Chromosome"/>
</dbReference>
<dbReference type="GO" id="GO:0005737">
    <property type="term" value="C:cytoplasm"/>
    <property type="evidence" value="ECO:0007669"/>
    <property type="project" value="TreeGrafter"/>
</dbReference>
<dbReference type="GO" id="GO:0005525">
    <property type="term" value="F:GTP binding"/>
    <property type="evidence" value="ECO:0007669"/>
    <property type="project" value="UniProtKB-KW"/>
</dbReference>
<dbReference type="GO" id="GO:0003934">
    <property type="term" value="F:GTP cyclohydrolase I activity"/>
    <property type="evidence" value="ECO:0007669"/>
    <property type="project" value="UniProtKB-UniRule"/>
</dbReference>
<dbReference type="GO" id="GO:0008270">
    <property type="term" value="F:zinc ion binding"/>
    <property type="evidence" value="ECO:0007669"/>
    <property type="project" value="UniProtKB-UniRule"/>
</dbReference>
<dbReference type="GO" id="GO:0006730">
    <property type="term" value="P:one-carbon metabolic process"/>
    <property type="evidence" value="ECO:0007669"/>
    <property type="project" value="UniProtKB-UniRule"/>
</dbReference>
<dbReference type="GO" id="GO:0006729">
    <property type="term" value="P:tetrahydrobiopterin biosynthetic process"/>
    <property type="evidence" value="ECO:0007669"/>
    <property type="project" value="TreeGrafter"/>
</dbReference>
<dbReference type="GO" id="GO:0046654">
    <property type="term" value="P:tetrahydrofolate biosynthetic process"/>
    <property type="evidence" value="ECO:0007669"/>
    <property type="project" value="UniProtKB-UniRule"/>
</dbReference>
<dbReference type="FunFam" id="1.10.286.10:FF:000002">
    <property type="entry name" value="GTP cyclohydrolase 1"/>
    <property type="match status" value="1"/>
</dbReference>
<dbReference type="FunFam" id="3.30.1130.10:FF:000001">
    <property type="entry name" value="GTP cyclohydrolase 1"/>
    <property type="match status" value="1"/>
</dbReference>
<dbReference type="Gene3D" id="1.10.286.10">
    <property type="match status" value="1"/>
</dbReference>
<dbReference type="Gene3D" id="3.30.1130.10">
    <property type="match status" value="1"/>
</dbReference>
<dbReference type="HAMAP" id="MF_00223">
    <property type="entry name" value="FolE"/>
    <property type="match status" value="1"/>
</dbReference>
<dbReference type="InterPro" id="IPR043133">
    <property type="entry name" value="GTP-CH-I_C/QueF"/>
</dbReference>
<dbReference type="InterPro" id="IPR043134">
    <property type="entry name" value="GTP-CH-I_N"/>
</dbReference>
<dbReference type="InterPro" id="IPR001474">
    <property type="entry name" value="GTP_CycHdrlase_I"/>
</dbReference>
<dbReference type="InterPro" id="IPR018234">
    <property type="entry name" value="GTP_CycHdrlase_I_CS"/>
</dbReference>
<dbReference type="InterPro" id="IPR020602">
    <property type="entry name" value="GTP_CycHdrlase_I_dom"/>
</dbReference>
<dbReference type="NCBIfam" id="TIGR00063">
    <property type="entry name" value="folE"/>
    <property type="match status" value="1"/>
</dbReference>
<dbReference type="NCBIfam" id="NF006824">
    <property type="entry name" value="PRK09347.1-1"/>
    <property type="match status" value="1"/>
</dbReference>
<dbReference type="NCBIfam" id="NF006826">
    <property type="entry name" value="PRK09347.1-3"/>
    <property type="match status" value="1"/>
</dbReference>
<dbReference type="PANTHER" id="PTHR11109:SF7">
    <property type="entry name" value="GTP CYCLOHYDROLASE 1"/>
    <property type="match status" value="1"/>
</dbReference>
<dbReference type="PANTHER" id="PTHR11109">
    <property type="entry name" value="GTP CYCLOHYDROLASE I"/>
    <property type="match status" value="1"/>
</dbReference>
<dbReference type="Pfam" id="PF01227">
    <property type="entry name" value="GTP_cyclohydroI"/>
    <property type="match status" value="1"/>
</dbReference>
<dbReference type="SUPFAM" id="SSF55620">
    <property type="entry name" value="Tetrahydrobiopterin biosynthesis enzymes-like"/>
    <property type="match status" value="1"/>
</dbReference>
<dbReference type="PROSITE" id="PS00859">
    <property type="entry name" value="GTP_CYCLOHYDROL_1_1"/>
    <property type="match status" value="1"/>
</dbReference>
<dbReference type="PROSITE" id="PS00860">
    <property type="entry name" value="GTP_CYCLOHYDROL_1_2"/>
    <property type="match status" value="1"/>
</dbReference>
<sequence length="216" mass="24174">MALSEAAVKVQAALLERGLETPMLPSVYSSEERKDKIEHHMKEILTLMSLDLSDDSLADTPRRIAKMYVDEIFSGLDYANFPKITVIDNKMGFDEMVRVQDISLTSTCEHHLVTIDGTATIAYLPRKKIIGLSKINRIVRFFAQRPQVQERLTQQVLVALQTLLETKDVAVKMDAVHYCVKSRGVMDSTSSTTTTALGGIFKSNPATRAEFLHQSK</sequence>